<sequence>MVNTKASMFLTFAGLVLLFVVCYASESEEKEFPKEMLSSIFAVDNDFKQEERDCAGYMRECKEKLCCSGYVCSSRWKWCVLPAPWRR</sequence>
<accession>D2Y2N1</accession>
<organism>
    <name type="scientific">Cyriopagopus hainanus</name>
    <name type="common">Chinese bird spider</name>
    <name type="synonym">Haplopelma hainanum</name>
    <dbReference type="NCBI Taxonomy" id="209901"/>
    <lineage>
        <taxon>Eukaryota</taxon>
        <taxon>Metazoa</taxon>
        <taxon>Ecdysozoa</taxon>
        <taxon>Arthropoda</taxon>
        <taxon>Chelicerata</taxon>
        <taxon>Arachnida</taxon>
        <taxon>Araneae</taxon>
        <taxon>Mygalomorphae</taxon>
        <taxon>Theraphosidae</taxon>
        <taxon>Haplopelma</taxon>
    </lineage>
</organism>
<evidence type="ECO:0000250" key="1"/>
<evidence type="ECO:0000250" key="2">
    <source>
        <dbReference type="UniProtKB" id="B3FIS6"/>
    </source>
</evidence>
<evidence type="ECO:0000255" key="3"/>
<evidence type="ECO:0000269" key="4">
    <source>
    </source>
</evidence>
<evidence type="ECO:0000305" key="5"/>
<comment type="function">
    <text evidence="1">Ion channel inhibitor.</text>
</comment>
<comment type="subcellular location">
    <subcellularLocation>
        <location>Secreted</location>
    </subcellularLocation>
</comment>
<comment type="tissue specificity">
    <text>Expressed by the venom gland.</text>
</comment>
<comment type="domain">
    <text evidence="1">The presence of a 'disulfide through disulfide knot' structurally defines this protein as a knottin.</text>
</comment>
<comment type="similarity">
    <text evidence="5">Belongs to the neurotoxin 10 (Hwtx-1) family. 51 (Hntx-8) subfamily. Hntx-8 sub-subfamily.</text>
</comment>
<feature type="signal peptide" evidence="3">
    <location>
        <begin position="1"/>
        <end position="24"/>
    </location>
</feature>
<feature type="propeptide" id="PRO_0000400613" evidence="4">
    <location>
        <begin position="25"/>
        <end position="52"/>
    </location>
</feature>
<feature type="peptide" id="PRO_0000400614" description="U3-theraphotoxin-Hhn1a 18">
    <location>
        <begin position="53"/>
        <end position="87"/>
    </location>
</feature>
<feature type="disulfide bond" evidence="2">
    <location>
        <begin position="54"/>
        <end position="67"/>
    </location>
</feature>
<feature type="disulfide bond" evidence="2">
    <location>
        <begin position="61"/>
        <end position="72"/>
    </location>
</feature>
<feature type="disulfide bond" evidence="2">
    <location>
        <begin position="66"/>
        <end position="79"/>
    </location>
</feature>
<dbReference type="EMBL" id="GU293108">
    <property type="protein sequence ID" value="ADB56924.1"/>
    <property type="molecule type" value="Genomic_DNA"/>
</dbReference>
<dbReference type="ArachnoServer" id="AS001657">
    <property type="toxin name" value="U3-theraphotoxin-Hhn1a"/>
</dbReference>
<dbReference type="GO" id="GO:0005576">
    <property type="term" value="C:extracellular region"/>
    <property type="evidence" value="ECO:0007669"/>
    <property type="project" value="UniProtKB-SubCell"/>
</dbReference>
<dbReference type="GO" id="GO:0008200">
    <property type="term" value="F:ion channel inhibitor activity"/>
    <property type="evidence" value="ECO:0007669"/>
    <property type="project" value="InterPro"/>
</dbReference>
<dbReference type="GO" id="GO:0090729">
    <property type="term" value="F:toxin activity"/>
    <property type="evidence" value="ECO:0007669"/>
    <property type="project" value="UniProtKB-KW"/>
</dbReference>
<dbReference type="InterPro" id="IPR011696">
    <property type="entry name" value="Huwentoxin-1"/>
</dbReference>
<dbReference type="InterPro" id="IPR013140">
    <property type="entry name" value="Huwentoxin_CS1"/>
</dbReference>
<dbReference type="Pfam" id="PF07740">
    <property type="entry name" value="Toxin_12"/>
    <property type="match status" value="1"/>
</dbReference>
<dbReference type="SUPFAM" id="SSF57059">
    <property type="entry name" value="omega toxin-like"/>
    <property type="match status" value="1"/>
</dbReference>
<dbReference type="PROSITE" id="PS60021">
    <property type="entry name" value="HWTX_1"/>
    <property type="match status" value="1"/>
</dbReference>
<proteinExistence type="evidence at protein level"/>
<name>H8A18_CYRHA</name>
<protein>
    <recommendedName>
        <fullName>U3-theraphotoxin-Hhn1a 18</fullName>
        <shortName>U3-TRTX-Hhn1a</shortName>
    </recommendedName>
    <alternativeName>
        <fullName>Hainantoxin-VIII.18</fullName>
        <shortName>HNTX-VIII.18</shortName>
    </alternativeName>
    <alternativeName>
        <fullName>Peptide F4-27.90</fullName>
    </alternativeName>
</protein>
<keyword id="KW-0903">Direct protein sequencing</keyword>
<keyword id="KW-1015">Disulfide bond</keyword>
<keyword id="KW-0872">Ion channel impairing toxin</keyword>
<keyword id="KW-0960">Knottin</keyword>
<keyword id="KW-0964">Secreted</keyword>
<keyword id="KW-0732">Signal</keyword>
<keyword id="KW-0800">Toxin</keyword>
<reference key="1">
    <citation type="journal article" date="2010" name="J. Proteome Res.">
        <title>Molecular diversification of peptide toxins from the tarantula Haplopelma hainanum (Ornithoctonus hainana) venom based on transcriptomic, peptidomic, and genomic analyses.</title>
        <authorList>
            <person name="Tang X."/>
            <person name="Zhang Y."/>
            <person name="Hu W."/>
            <person name="Xu D."/>
            <person name="Tao H."/>
            <person name="Yang X."/>
            <person name="Li Y."/>
            <person name="Jiang L."/>
            <person name="Liang S."/>
        </authorList>
    </citation>
    <scope>NUCLEOTIDE SEQUENCE [LARGE SCALE GENOMIC DNA]</scope>
    <scope>PROTEIN SEQUENCE OF 53-85</scope>
    <scope>IDENTIFICATION BY MASS SPECTROMETRY</scope>
    <source>
        <tissue>Venom</tissue>
        <tissue>Venom gland</tissue>
    </source>
</reference>